<reference key="1">
    <citation type="journal article" date="1997" name="Yeast">
        <title>DNA sequencing and analysis of 130 kb from yeast chromosome XV.</title>
        <authorList>
            <person name="Voss H."/>
            <person name="Benes V."/>
            <person name="Andrade M.A."/>
            <person name="Valencia A."/>
            <person name="Rechmann S."/>
            <person name="Teodoru C."/>
            <person name="Schwager C."/>
            <person name="Paces V."/>
            <person name="Sander C."/>
            <person name="Ansorge W."/>
        </authorList>
    </citation>
    <scope>NUCLEOTIDE SEQUENCE [GENOMIC DNA]</scope>
</reference>
<reference key="2">
    <citation type="journal article" date="1997" name="Nature">
        <title>The nucleotide sequence of Saccharomyces cerevisiae chromosome XV.</title>
        <authorList>
            <person name="Dujon B."/>
            <person name="Albermann K."/>
            <person name="Aldea M."/>
            <person name="Alexandraki D."/>
            <person name="Ansorge W."/>
            <person name="Arino J."/>
            <person name="Benes V."/>
            <person name="Bohn C."/>
            <person name="Bolotin-Fukuhara M."/>
            <person name="Bordonne R."/>
            <person name="Boyer J."/>
            <person name="Camasses A."/>
            <person name="Casamayor A."/>
            <person name="Casas C."/>
            <person name="Cheret G."/>
            <person name="Cziepluch C."/>
            <person name="Daignan-Fornier B."/>
            <person name="Dang V.-D."/>
            <person name="de Haan M."/>
            <person name="Delius H."/>
            <person name="Durand P."/>
            <person name="Fairhead C."/>
            <person name="Feldmann H."/>
            <person name="Gaillon L."/>
            <person name="Galisson F."/>
            <person name="Gamo F.-J."/>
            <person name="Gancedo C."/>
            <person name="Goffeau A."/>
            <person name="Goulding S.E."/>
            <person name="Grivell L.A."/>
            <person name="Habbig B."/>
            <person name="Hand N.J."/>
            <person name="Hani J."/>
            <person name="Hattenhorst U."/>
            <person name="Hebling U."/>
            <person name="Hernando Y."/>
            <person name="Herrero E."/>
            <person name="Heumann K."/>
            <person name="Hiesel R."/>
            <person name="Hilger F."/>
            <person name="Hofmann B."/>
            <person name="Hollenberg C.P."/>
            <person name="Hughes B."/>
            <person name="Jauniaux J.-C."/>
            <person name="Kalogeropoulos A."/>
            <person name="Katsoulou C."/>
            <person name="Kordes E."/>
            <person name="Lafuente M.J."/>
            <person name="Landt O."/>
            <person name="Louis E.J."/>
            <person name="Maarse A.C."/>
            <person name="Madania A."/>
            <person name="Mannhaupt G."/>
            <person name="Marck C."/>
            <person name="Martin R.P."/>
            <person name="Mewes H.-W."/>
            <person name="Michaux G."/>
            <person name="Paces V."/>
            <person name="Parle-McDermott A.G."/>
            <person name="Pearson B.M."/>
            <person name="Perrin A."/>
            <person name="Pettersson B."/>
            <person name="Poch O."/>
            <person name="Pohl T.M."/>
            <person name="Poirey R."/>
            <person name="Portetelle D."/>
            <person name="Pujol A."/>
            <person name="Purnelle B."/>
            <person name="Ramezani Rad M."/>
            <person name="Rechmann S."/>
            <person name="Schwager C."/>
            <person name="Schweizer M."/>
            <person name="Sor F."/>
            <person name="Sterky F."/>
            <person name="Tarassov I.A."/>
            <person name="Teodoru C."/>
            <person name="Tettelin H."/>
            <person name="Thierry A."/>
            <person name="Tobiasch E."/>
            <person name="Tzermia M."/>
            <person name="Uhlen M."/>
            <person name="Unseld M."/>
            <person name="Valens M."/>
            <person name="Vandenbol M."/>
            <person name="Vetter I."/>
            <person name="Vlcek C."/>
            <person name="Voet M."/>
            <person name="Volckaert G."/>
            <person name="Voss H."/>
            <person name="Wambutt R."/>
            <person name="Wedler H."/>
            <person name="Wiemann S."/>
            <person name="Winsor B."/>
            <person name="Wolfe K.H."/>
            <person name="Zollner A."/>
            <person name="Zumstein E."/>
            <person name="Kleine K."/>
        </authorList>
    </citation>
    <scope>NUCLEOTIDE SEQUENCE [LARGE SCALE GENOMIC DNA]</scope>
    <source>
        <strain>ATCC 204508 / S288c</strain>
    </source>
</reference>
<reference key="3">
    <citation type="journal article" date="2014" name="G3 (Bethesda)">
        <title>The reference genome sequence of Saccharomyces cerevisiae: Then and now.</title>
        <authorList>
            <person name="Engel S.R."/>
            <person name="Dietrich F.S."/>
            <person name="Fisk D.G."/>
            <person name="Binkley G."/>
            <person name="Balakrishnan R."/>
            <person name="Costanzo M.C."/>
            <person name="Dwight S.S."/>
            <person name="Hitz B.C."/>
            <person name="Karra K."/>
            <person name="Nash R.S."/>
            <person name="Weng S."/>
            <person name="Wong E.D."/>
            <person name="Lloyd P."/>
            <person name="Skrzypek M.S."/>
            <person name="Miyasato S.R."/>
            <person name="Simison M."/>
            <person name="Cherry J.M."/>
        </authorList>
    </citation>
    <scope>GENOME REANNOTATION</scope>
    <source>
        <strain>ATCC 204508 / S288c</strain>
    </source>
</reference>
<reference key="4">
    <citation type="journal article" date="1998" name="Genome Res.">
        <title>Transposable elements and genome organization: a comprehensive survey of retrotransposons revealed by the complete Saccharomyces cerevisiae genome sequence.</title>
        <authorList>
            <person name="Kim J.M."/>
            <person name="Vanguri S."/>
            <person name="Boeke J.D."/>
            <person name="Gabriel A."/>
            <person name="Voytas D.F."/>
        </authorList>
    </citation>
    <scope>NOMENCLATURE</scope>
</reference>
<reference key="5">
    <citation type="journal article" date="2005" name="Cytogenet. Genome Res.">
        <title>Happy together: the life and times of Ty retrotransposons and their hosts.</title>
        <authorList>
            <person name="Lesage P."/>
            <person name="Todeschini A.L."/>
        </authorList>
    </citation>
    <scope>REVIEW</scope>
</reference>
<reference key="6">
    <citation type="journal article" date="2005" name="Cytogenet. Genome Res.">
        <title>Reverse transcriptase and integrase of the Saccharomyces cerevisiae Ty1 element.</title>
        <authorList>
            <person name="Wilhelm F.-X."/>
            <person name="Wilhelm M."/>
            <person name="Gabriel A."/>
        </authorList>
    </citation>
    <scope>REVIEW</scope>
    <scope>DOMAINS</scope>
</reference>
<feature type="chain" id="PRO_0000279161" description="Transposon Ty1-OR Gag-Pol polyprotein">
    <location>
        <begin position="1"/>
        <end position="1755"/>
    </location>
</feature>
<feature type="chain" id="PRO_0000279162" description="Capsid protein" evidence="1">
    <location>
        <begin position="1"/>
        <end position="401"/>
    </location>
</feature>
<feature type="chain" id="PRO_0000279163" description="Ty1 protease" evidence="1">
    <location>
        <begin position="402"/>
        <end position="582"/>
    </location>
</feature>
<feature type="chain" id="PRO_0000279164" description="Integrase" evidence="1">
    <location>
        <begin position="583"/>
        <end position="1217"/>
    </location>
</feature>
<feature type="chain" id="PRO_0000279165" description="Reverse transcriptase/ribonuclease H" evidence="1">
    <location>
        <begin position="1218"/>
        <end position="1755"/>
    </location>
</feature>
<feature type="domain" description="Integrase catalytic" evidence="3">
    <location>
        <begin position="660"/>
        <end position="835"/>
    </location>
</feature>
<feature type="domain" description="Reverse transcriptase Ty1/copia-type">
    <location>
        <begin position="1338"/>
        <end position="1476"/>
    </location>
</feature>
<feature type="domain" description="RNase H Ty1/copia-type">
    <location>
        <begin position="1610"/>
        <end position="1752"/>
    </location>
</feature>
<feature type="region of interest" description="Disordered" evidence="5">
    <location>
        <begin position="1"/>
        <end position="93"/>
    </location>
</feature>
<feature type="region of interest" description="Disordered" evidence="5">
    <location>
        <begin position="126"/>
        <end position="173"/>
    </location>
</feature>
<feature type="region of interest" description="RNA-binding" evidence="1">
    <location>
        <begin position="299"/>
        <end position="401"/>
    </location>
</feature>
<feature type="region of interest" description="Disordered" evidence="5">
    <location>
        <begin position="352"/>
        <end position="421"/>
    </location>
</feature>
<feature type="region of interest" description="Integrase-type zinc finger-like">
    <location>
        <begin position="583"/>
        <end position="640"/>
    </location>
</feature>
<feature type="region of interest" description="Disordered" evidence="5">
    <location>
        <begin position="956"/>
        <end position="1087"/>
    </location>
</feature>
<feature type="region of interest" description="Disordered" evidence="5">
    <location>
        <begin position="1092"/>
        <end position="1111"/>
    </location>
</feature>
<feature type="region of interest" description="Disordered" evidence="5">
    <location>
        <begin position="1130"/>
        <end position="1187"/>
    </location>
</feature>
<feature type="short sequence motif" description="Bipartite nuclear localization signal" evidence="1">
    <location>
        <begin position="1178"/>
        <end position="1212"/>
    </location>
</feature>
<feature type="compositionally biased region" description="Polar residues" evidence="5">
    <location>
        <begin position="1"/>
        <end position="10"/>
    </location>
</feature>
<feature type="compositionally biased region" description="Polar residues" evidence="5">
    <location>
        <begin position="48"/>
        <end position="60"/>
    </location>
</feature>
<feature type="compositionally biased region" description="Polar residues" evidence="5">
    <location>
        <begin position="127"/>
        <end position="152"/>
    </location>
</feature>
<feature type="compositionally biased region" description="Low complexity" evidence="5">
    <location>
        <begin position="153"/>
        <end position="165"/>
    </location>
</feature>
<feature type="compositionally biased region" description="Low complexity" evidence="5">
    <location>
        <begin position="402"/>
        <end position="418"/>
    </location>
</feature>
<feature type="compositionally biased region" description="Low complexity" evidence="5">
    <location>
        <begin position="960"/>
        <end position="969"/>
    </location>
</feature>
<feature type="compositionally biased region" description="Polar residues" evidence="5">
    <location>
        <begin position="1005"/>
        <end position="1015"/>
    </location>
</feature>
<feature type="compositionally biased region" description="Basic and acidic residues" evidence="5">
    <location>
        <begin position="1038"/>
        <end position="1053"/>
    </location>
</feature>
<feature type="compositionally biased region" description="Polar residues" evidence="5">
    <location>
        <begin position="1054"/>
        <end position="1082"/>
    </location>
</feature>
<feature type="compositionally biased region" description="Polar residues" evidence="5">
    <location>
        <begin position="1101"/>
        <end position="1111"/>
    </location>
</feature>
<feature type="active site" description="For protease activity; shared with dimeric partner" evidence="4">
    <location>
        <position position="461"/>
    </location>
</feature>
<feature type="binding site" evidence="3">
    <location>
        <position position="671"/>
    </location>
    <ligand>
        <name>Mg(2+)</name>
        <dbReference type="ChEBI" id="CHEBI:18420"/>
        <label>1</label>
        <note>catalytic; for integrase activity</note>
    </ligand>
</feature>
<feature type="binding site" evidence="3">
    <location>
        <position position="736"/>
    </location>
    <ligand>
        <name>Mg(2+)</name>
        <dbReference type="ChEBI" id="CHEBI:18420"/>
        <label>1</label>
        <note>catalytic; for integrase activity</note>
    </ligand>
</feature>
<feature type="binding site" evidence="3">
    <location>
        <position position="1346"/>
    </location>
    <ligand>
        <name>Mg(2+)</name>
        <dbReference type="ChEBI" id="CHEBI:18420"/>
        <label>2</label>
        <note>catalytic; for reverse transcriptase activity</note>
    </ligand>
</feature>
<feature type="binding site" evidence="3">
    <location>
        <position position="1427"/>
    </location>
    <ligand>
        <name>Mg(2+)</name>
        <dbReference type="ChEBI" id="CHEBI:18420"/>
        <label>2</label>
        <note>catalytic; for reverse transcriptase activity</note>
    </ligand>
</feature>
<feature type="binding site" evidence="3">
    <location>
        <position position="1428"/>
    </location>
    <ligand>
        <name>Mg(2+)</name>
        <dbReference type="ChEBI" id="CHEBI:18420"/>
        <label>2</label>
        <note>catalytic; for reverse transcriptase activity</note>
    </ligand>
</feature>
<feature type="binding site" evidence="3">
    <location>
        <position position="1610"/>
    </location>
    <ligand>
        <name>Mg(2+)</name>
        <dbReference type="ChEBI" id="CHEBI:18420"/>
        <label>3</label>
        <note>catalytic; for RNase H activity</note>
    </ligand>
</feature>
<feature type="binding site" evidence="3">
    <location>
        <position position="1652"/>
    </location>
    <ligand>
        <name>Mg(2+)</name>
        <dbReference type="ChEBI" id="CHEBI:18420"/>
        <label>3</label>
        <note>catalytic; for RNase H activity</note>
    </ligand>
</feature>
<feature type="binding site" evidence="3">
    <location>
        <position position="1685"/>
    </location>
    <ligand>
        <name>Mg(2+)</name>
        <dbReference type="ChEBI" id="CHEBI:18420"/>
        <label>3</label>
        <note>catalytic; for RNase H activity</note>
    </ligand>
</feature>
<feature type="site" description="Cleavage; by Ty1 protease" evidence="1">
    <location>
        <begin position="401"/>
        <end position="402"/>
    </location>
</feature>
<feature type="site" description="Cleavage; by Ty1 protease" evidence="1">
    <location>
        <begin position="582"/>
        <end position="583"/>
    </location>
</feature>
<feature type="site" description="Cleavage; by Ty1 protease" evidence="1">
    <location>
        <begin position="1217"/>
        <end position="1218"/>
    </location>
</feature>
<feature type="modified residue" description="Phosphoserine" evidence="2">
    <location>
        <position position="416"/>
    </location>
</feature>
<name>YO12B_YEAST</name>
<comment type="function">
    <text evidence="1">Capsid protein (CA) is the structural component of the virus-like particle (VLP), forming the shell that encapsulates the retrotransposons dimeric RNA genome. The particles are assembled from trimer-clustered units and there are holes in the capsid shells that allow for the diffusion of macromolecules. CA also has nucleocapsid-like chaperone activity, promoting primer tRNA(i)-Met annealing to the multipartite primer-binding site (PBS), dimerization of Ty1 RNA and initiation of reverse transcription (By similarity).</text>
</comment>
<comment type="function">
    <text evidence="1">The aspartyl protease (PR) mediates the proteolytic cleavages of the Gag and Gag-Pol polyproteins after assembly of the VLP.</text>
</comment>
<comment type="function">
    <text evidence="1">Reverse transcriptase/ribonuclease H (RT) is a multifunctional enzyme that catalyzes the conversion of the retro-elements RNA genome into dsDNA within the VLP. The enzyme displays a DNA polymerase activity that can copy either DNA or RNA templates, and a ribonuclease H (RNase H) activity that cleaves the RNA strand of RNA-DNA heteroduplexes during plus-strand synthesis and hydrolyzes RNA primers. The conversion leads to a linear dsDNA copy of the retrotransposon that includes long terminal repeats (LTRs) at both ends (By similarity).</text>
</comment>
<comment type="function">
    <text evidence="1">Integrase (IN) targets the VLP to the nucleus, where a subparticle preintegration complex (PIC) containing at least integrase and the newly synthesized dsDNA copy of the retrotransposon must transit the nuclear membrane. Once in the nucleus, integrase performs the integration of the dsDNA into the host genome (By similarity).</text>
</comment>
<comment type="catalytic activity">
    <reaction>
        <text>DNA(n) + a 2'-deoxyribonucleoside 5'-triphosphate = DNA(n+1) + diphosphate</text>
        <dbReference type="Rhea" id="RHEA:22508"/>
        <dbReference type="Rhea" id="RHEA-COMP:17339"/>
        <dbReference type="Rhea" id="RHEA-COMP:17340"/>
        <dbReference type="ChEBI" id="CHEBI:33019"/>
        <dbReference type="ChEBI" id="CHEBI:61560"/>
        <dbReference type="ChEBI" id="CHEBI:173112"/>
        <dbReference type="EC" id="2.7.7.49"/>
    </reaction>
</comment>
<comment type="catalytic activity">
    <reaction>
        <text>DNA(n) + a 2'-deoxyribonucleoside 5'-triphosphate = DNA(n+1) + diphosphate</text>
        <dbReference type="Rhea" id="RHEA:22508"/>
        <dbReference type="Rhea" id="RHEA-COMP:17339"/>
        <dbReference type="Rhea" id="RHEA-COMP:17340"/>
        <dbReference type="ChEBI" id="CHEBI:33019"/>
        <dbReference type="ChEBI" id="CHEBI:61560"/>
        <dbReference type="ChEBI" id="CHEBI:173112"/>
        <dbReference type="EC" id="2.7.7.7"/>
    </reaction>
</comment>
<comment type="catalytic activity">
    <reaction>
        <text>Endonucleolytic cleavage to 5'-phosphomonoester.</text>
        <dbReference type="EC" id="3.1.26.4"/>
    </reaction>
</comment>
<comment type="subunit">
    <text evidence="1">The capsid protein forms a homotrimer, from which the VLPs are assembled. The protease is a homodimer, whose active site consists of two apposed aspartic acid residues (By similarity).</text>
</comment>
<comment type="subcellular location">
    <subcellularLocation>
        <location>Cytoplasm</location>
    </subcellularLocation>
    <subcellularLocation>
        <location evidence="1">Nucleus</location>
    </subcellularLocation>
</comment>
<comment type="alternative products">
    <event type="ribosomal frameshifting"/>
    <isoform>
        <id>Q92393-1</id>
        <name>Transposon Ty1-OR Gag-Pol polyprotein</name>
        <sequence type="displayed"/>
    </isoform>
    <isoform>
        <id>P0CX59-1</id>
        <name>Transposon Ty1-OR Gag polyprotein</name>
        <sequence type="external"/>
    </isoform>
    <text evidence="1">The Gag-Pol polyprotein is generated by a +1 ribosomal frameshift. The ratio of Gag:Gag-Pol varies between 20:1 and 5:1 (By similarity).</text>
</comment>
<comment type="domain">
    <text evidence="1">The C-terminal RNA-binding region of CA is sufficient for all its nucleocapsid-like chaperone activities.</text>
</comment>
<comment type="domain">
    <text evidence="1">Integrase core domain contains the D-x(n)-D-x(35)-E motif, named for the phylogenetically conserved glutamic acid and aspartic acid residues and the invariant 35 amino acid spacing between the second and third acidic residues. Each acidic residue of the D,D(35)E motif is independently essential for the 3'-processing and strand transfer activities of purified integrase protein (By similarity).</text>
</comment>
<comment type="PTM">
    <text evidence="1">Initially, virus-like particles (VLPs) are composed of the structural unprocessed proteins Gag and Gag-Pol, and also contain the host initiator methionine tRNA (tRNA(i)-Met) which serves as a primer for minus-strand DNA synthesis, and a dimer of genomic Ty RNA. Processing of the polyproteins occurs within the particle and proceeds by an ordered pathway, called maturation. First, the protease (PR) is released by autocatalytic cleavage of the Gag-Pol polyprotein yielding capsid protein p45 and a Pol-p154 precursor protein. This cleavage is a prerequisite for subsequent processing of Pol-p154 at the remaining sites to release the mature structural and catalytic proteins. Maturation takes place prior to the RT reaction and is required to produce transposition-competent VLPs (By similarity).</text>
</comment>
<comment type="miscellaneous">
    <text>Retrotransposons are mobile genetic entities that are able to replicate via an RNA intermediate and a reverse transcription step. In contrast to retroviruses, retrotransposons are non-infectious, lack an envelope and remain intracellular. Ty1 retrotransposons belong to the copia elements (pseudoviridae).</text>
</comment>
<comment type="miscellaneous">
    <molecule>Isoform Transposon Ty1-OR Gag-Pol polyprotein</molecule>
    <text>Produced by +1 ribosomal frameshifting between codon Leu-435 and Gly-436 of the YOR142W-A ORF.</text>
</comment>
<dbReference type="EC" id="3.4.23.-"/>
<dbReference type="EC" id="2.7.7.49"/>
<dbReference type="EC" id="2.7.7.7"/>
<dbReference type="EC" id="3.1.26.4"/>
<dbReference type="EMBL" id="X94335">
    <property type="protein sequence ID" value="CAA64060.1"/>
    <property type="molecule type" value="Genomic_DNA"/>
</dbReference>
<dbReference type="EMBL" id="Z75050">
    <property type="protein sequence ID" value="CAA99343.1"/>
    <property type="molecule type" value="Genomic_DNA"/>
</dbReference>
<dbReference type="EMBL" id="Z75051">
    <property type="protein sequence ID" value="CAA99345.1"/>
    <property type="molecule type" value="Genomic_DNA"/>
</dbReference>
<dbReference type="EMBL" id="BK006948">
    <property type="protein sequence ID" value="DAA10915.1"/>
    <property type="molecule type" value="Genomic_DNA"/>
</dbReference>
<dbReference type="PIR" id="S40969">
    <property type="entry name" value="S40969"/>
</dbReference>
<dbReference type="PIR" id="S61763">
    <property type="entry name" value="S61763"/>
</dbReference>
<dbReference type="RefSeq" id="NP_058183.1">
    <molecule id="Q92393-1"/>
    <property type="nucleotide sequence ID" value="NM_001184386.2"/>
</dbReference>
<dbReference type="SMR" id="Q92393"/>
<dbReference type="BioGRID" id="34539">
    <property type="interactions" value="10"/>
</dbReference>
<dbReference type="FunCoup" id="Q92393">
    <property type="interactions" value="59"/>
</dbReference>
<dbReference type="GlyGen" id="Q92393">
    <property type="glycosylation" value="3 sites"/>
</dbReference>
<dbReference type="iPTMnet" id="Q92393"/>
<dbReference type="PaxDb" id="4932-YOR142W-B"/>
<dbReference type="PeptideAtlas" id="Q92393"/>
<dbReference type="GeneID" id="854313"/>
<dbReference type="KEGG" id="sce:YOR142W-B"/>
<dbReference type="AGR" id="SGD:S000007352"/>
<dbReference type="SGD" id="S000007352">
    <property type="gene designation" value="YOR142W-B"/>
</dbReference>
<dbReference type="VEuPathDB" id="FungiDB:YOR142W-B"/>
<dbReference type="eggNOG" id="KOG0017">
    <property type="taxonomic scope" value="Eukaryota"/>
</dbReference>
<dbReference type="HOGENOM" id="CLU_244151_0_0_1"/>
<dbReference type="InParanoid" id="Q92393"/>
<dbReference type="OrthoDB" id="4046078at2759"/>
<dbReference type="Proteomes" id="UP000002311">
    <property type="component" value="Chromosome XV"/>
</dbReference>
<dbReference type="RNAct" id="Q92393">
    <property type="molecule type" value="protein"/>
</dbReference>
<dbReference type="GO" id="GO:0005737">
    <property type="term" value="C:cytoplasm"/>
    <property type="evidence" value="ECO:0007669"/>
    <property type="project" value="UniProtKB-SubCell"/>
</dbReference>
<dbReference type="GO" id="GO:0005634">
    <property type="term" value="C:nucleus"/>
    <property type="evidence" value="ECO:0000314"/>
    <property type="project" value="SGD"/>
</dbReference>
<dbReference type="GO" id="GO:0004190">
    <property type="term" value="F:aspartic-type endopeptidase activity"/>
    <property type="evidence" value="ECO:0007669"/>
    <property type="project" value="UniProtKB-KW"/>
</dbReference>
<dbReference type="GO" id="GO:0005524">
    <property type="term" value="F:ATP binding"/>
    <property type="evidence" value="ECO:0007669"/>
    <property type="project" value="UniProtKB-KW"/>
</dbReference>
<dbReference type="GO" id="GO:0003677">
    <property type="term" value="F:DNA binding"/>
    <property type="evidence" value="ECO:0007669"/>
    <property type="project" value="UniProtKB-KW"/>
</dbReference>
<dbReference type="GO" id="GO:0003887">
    <property type="term" value="F:DNA-directed DNA polymerase activity"/>
    <property type="evidence" value="ECO:0007669"/>
    <property type="project" value="UniProtKB-KW"/>
</dbReference>
<dbReference type="GO" id="GO:0003723">
    <property type="term" value="F:RNA binding"/>
    <property type="evidence" value="ECO:0007669"/>
    <property type="project" value="UniProtKB-KW"/>
</dbReference>
<dbReference type="GO" id="GO:0003964">
    <property type="term" value="F:RNA-directed DNA polymerase activity"/>
    <property type="evidence" value="ECO:0007669"/>
    <property type="project" value="UniProtKB-KW"/>
</dbReference>
<dbReference type="GO" id="GO:0004523">
    <property type="term" value="F:RNA-DNA hybrid ribonuclease activity"/>
    <property type="evidence" value="ECO:0007669"/>
    <property type="project" value="UniProtKB-EC"/>
</dbReference>
<dbReference type="GO" id="GO:0008270">
    <property type="term" value="F:zinc ion binding"/>
    <property type="evidence" value="ECO:0007669"/>
    <property type="project" value="UniProtKB-KW"/>
</dbReference>
<dbReference type="GO" id="GO:0015074">
    <property type="term" value="P:DNA integration"/>
    <property type="evidence" value="ECO:0007669"/>
    <property type="project" value="UniProtKB-KW"/>
</dbReference>
<dbReference type="GO" id="GO:0006310">
    <property type="term" value="P:DNA recombination"/>
    <property type="evidence" value="ECO:0007669"/>
    <property type="project" value="UniProtKB-KW"/>
</dbReference>
<dbReference type="GO" id="GO:0006508">
    <property type="term" value="P:proteolysis"/>
    <property type="evidence" value="ECO:0007669"/>
    <property type="project" value="UniProtKB-KW"/>
</dbReference>
<dbReference type="GO" id="GO:0032196">
    <property type="term" value="P:transposition"/>
    <property type="evidence" value="ECO:0007669"/>
    <property type="project" value="UniProtKB-KW"/>
</dbReference>
<dbReference type="GO" id="GO:0075523">
    <property type="term" value="P:viral translational frameshifting"/>
    <property type="evidence" value="ECO:0007669"/>
    <property type="project" value="UniProtKB-KW"/>
</dbReference>
<dbReference type="CDD" id="cd09272">
    <property type="entry name" value="RNase_HI_RT_Ty1"/>
    <property type="match status" value="1"/>
</dbReference>
<dbReference type="FunFam" id="3.30.420.10:FF:000050">
    <property type="entry name" value="Transposon Ty2-DR3 Gag-Pol polyprotein"/>
    <property type="match status" value="1"/>
</dbReference>
<dbReference type="Gene3D" id="3.30.420.10">
    <property type="entry name" value="Ribonuclease H-like superfamily/Ribonuclease H"/>
    <property type="match status" value="1"/>
</dbReference>
<dbReference type="InterPro" id="IPR001969">
    <property type="entry name" value="Aspartic_peptidase_AS"/>
</dbReference>
<dbReference type="InterPro" id="IPR043502">
    <property type="entry name" value="DNA/RNA_pol_sf"/>
</dbReference>
<dbReference type="InterPro" id="IPR001584">
    <property type="entry name" value="Integrase_cat-core"/>
</dbReference>
<dbReference type="InterPro" id="IPR039537">
    <property type="entry name" value="Retrotran_Ty1/copia-like"/>
</dbReference>
<dbReference type="InterPro" id="IPR012337">
    <property type="entry name" value="RNaseH-like_sf"/>
</dbReference>
<dbReference type="InterPro" id="IPR036397">
    <property type="entry name" value="RNaseH_sf"/>
</dbReference>
<dbReference type="InterPro" id="IPR013103">
    <property type="entry name" value="RVT_2"/>
</dbReference>
<dbReference type="InterPro" id="IPR015820">
    <property type="entry name" value="TYA"/>
</dbReference>
<dbReference type="PANTHER" id="PTHR42648">
    <property type="entry name" value="TRANSPOSASE, PUTATIVE-RELATED"/>
    <property type="match status" value="1"/>
</dbReference>
<dbReference type="PANTHER" id="PTHR42648:SF11">
    <property type="entry name" value="TRANSPOSON TY4-P GAG-POL POLYPROTEIN"/>
    <property type="match status" value="1"/>
</dbReference>
<dbReference type="Pfam" id="PF00665">
    <property type="entry name" value="rve"/>
    <property type="match status" value="1"/>
</dbReference>
<dbReference type="Pfam" id="PF07727">
    <property type="entry name" value="RVT_2"/>
    <property type="match status" value="1"/>
</dbReference>
<dbReference type="Pfam" id="PF01021">
    <property type="entry name" value="TYA"/>
    <property type="match status" value="1"/>
</dbReference>
<dbReference type="SUPFAM" id="SSF56672">
    <property type="entry name" value="DNA/RNA polymerases"/>
    <property type="match status" value="1"/>
</dbReference>
<dbReference type="SUPFAM" id="SSF53098">
    <property type="entry name" value="Ribonuclease H-like"/>
    <property type="match status" value="1"/>
</dbReference>
<dbReference type="PROSITE" id="PS00141">
    <property type="entry name" value="ASP_PROTEASE"/>
    <property type="match status" value="1"/>
</dbReference>
<dbReference type="PROSITE" id="PS50994">
    <property type="entry name" value="INTEGRASE"/>
    <property type="match status" value="1"/>
</dbReference>
<protein>
    <recommendedName>
        <fullName>Transposon Ty1-OR Gag-Pol polyprotein</fullName>
    </recommendedName>
    <alternativeName>
        <fullName>Gag-Pol-p199</fullName>
    </alternativeName>
    <alternativeName>
        <fullName>TY1A-TY1B</fullName>
    </alternativeName>
    <alternativeName>
        <fullName>Transposon Ty1 TYA-TYB polyprotein</fullName>
    </alternativeName>
    <alternativeName>
        <fullName>p190</fullName>
    </alternativeName>
    <component>
        <recommendedName>
            <fullName>Capsid protein</fullName>
            <shortName>CA</shortName>
        </recommendedName>
        <alternativeName>
            <fullName>Gag-p45</fullName>
        </alternativeName>
        <alternativeName>
            <fullName>p54</fullName>
        </alternativeName>
    </component>
    <component>
        <recommendedName>
            <fullName>Ty1 protease</fullName>
            <shortName>PR</shortName>
            <ecNumber>3.4.23.-</ecNumber>
        </recommendedName>
        <alternativeName>
            <fullName>Pol-p20</fullName>
        </alternativeName>
        <alternativeName>
            <fullName>p23</fullName>
        </alternativeName>
    </component>
    <component>
        <recommendedName>
            <fullName>Integrase</fullName>
            <shortName>IN</shortName>
        </recommendedName>
        <alternativeName>
            <fullName>Pol-p71</fullName>
        </alternativeName>
        <alternativeName>
            <fullName>p84</fullName>
        </alternativeName>
        <alternativeName>
            <fullName>p90</fullName>
        </alternativeName>
    </component>
    <component>
        <recommendedName>
            <fullName>Reverse transcriptase/ribonuclease H</fullName>
            <shortName>RT</shortName>
            <shortName>RT-RH</shortName>
            <ecNumber>2.7.7.49</ecNumber>
            <ecNumber>2.7.7.7</ecNumber>
            <ecNumber>3.1.26.4</ecNumber>
        </recommendedName>
        <alternativeName>
            <fullName>Pol-p63</fullName>
        </alternativeName>
        <alternativeName>
            <fullName>p60</fullName>
        </alternativeName>
    </component>
</protein>
<sequence length="1755" mass="198537">MESQQLSNYPHISHGSACASVTSKEVHTNQDPLDVSASKIQEYDKASTKANSQQTTTPASSAVPENPHHASPQPASVPPPQNGPYPQQCMMTQNQANPSGWSFYGHPSMIPYTPYQMSPMYFPPGPQSQFPQYPSSVGTPLSTPSPESGNTFTDSSSADSDMTSTKKYVRPPPMLTSPNDFPNWVKTYIKFLQNSNLGGIIPTVNGKPVRPITDDELTFLYNTFQIFAPSQFLPTWVKDILSVDYTDIMKILSKSIEKMQSDTQEANDIVTLANLQYNGSTPADAFETKVTNIIDRLNNNGIHINNKVACQLIMRGLSGEYKFLRYTRHRHLNMTVAELFLDIHAIYEEQQGSRNSKPNYRRNPSDEKNDSRSYTNTTKPKVIARNPQKTNNSKSKTARAHNVSTSNNSPSTDNDSISKSTTEPIQLNNKHDLHLGQKLTESTVNHTNHSDDELPGHLLLDSGASRTLIRSAHHIHSASSNPDINVVDAQKRNIPINAIGDLQFHFQDNTKTSIKVLHTPNIAYDLLSLNELAAVDITACFTKNVLERSDGTVLAPIVKYGDFYWVSKKYLLPSNISVPTINNVHTSESTRKYPYPFIHRMLAHANAQTIRYSLKNNTITYFNESDVDWSSAIDYQCPDCLIGKSTKHRHIKGSRLKYQNSYEPFQYLHTDIFGPVHNLPKSAPSYFISFTDETTKFRWVYPLHDRREDSILDVFTTILAFIKNQFQASVLVIQMDRGSEYTNRTLHKFLEKNGITPCYTTTADSRAHGVAERLNRTLLDDCRTQLQCSGLPNHLWFSAIEFSTIVRNSLASPKSKKSARQHAGLAGLDISTLLPFGQPVIVNDHNPNSKIHPRGIPGYALHPSRNSYGYIIYLPSLKKTVDTTNYVILQGKESRLDQFNYDALTFDEDLNRLTASYHSFIASNEIQESNDLNIESDHDFQSDIELHPEQPRNVLSKAVSPTDSTPPSTHTEDSKRVSKTNIRAPREVDPNISESNILPSKKRSSTPQISNIESTGSGGMHKLNVPLLAPMSQSNTHESSHASKSKDFRHSDSYSENETNHTNVPISSTGGTNNKTVPQISDQETEKRIIHRSPSIDASPPENNSSHNIVPIKTPTTVSEQNTEESIIADLPLPDLPPESPTEFPDPFKELPPINSRQTNSSLGGIGDSNAYTTINSKKRSLEDNETEIKVSRDTWNTKNMRSLEPPRSKKRIHLIAAVKAVKSIKPIRTTLRYDEAITYNKDIKEKEKYIEAYHKEVNQLLKMKTWDTDKYYDRKEIDPKRVINSMFIFNRKRDGTHKARFVARGDIQHPDTYDSGMQSNTVHHYALMTSLSLALDNNYYITQLDISSAYLYADIKEELYIRPPPHLGMNDKLIRLKKSLYGLKQSGANWYETIKSYLIKQCGMEEVRGWSCVFKNSQVTICLFVDDMILFSKDLNSNKRIIAKLKMQYDTKIINLGESDDEIQYDILGLEIKYQRGKYMKLGMENSLTEKIPKLNVPLNPNGRKLGAPGQPGLYINQQELELEEDDYKMKVHEMQKLIGLASYVGYKFRFDLLYYINTLAQHILFPSKQVLDMTYELIQFIWNTRDKQLIWHKSKPVKPTNKLVVISDASYGNQPYYKSQIGNIYLLNGKVIGGKSTKASLTCTSTTEAEIHAISESVPLLNNLSYLIQELDKKPITKGLLTDSKSTISIIISNNEEKFRNRFFGTKAMRLRDEVSGNHLHVCYIETKKNIADVMTKPLPIKTFKLLTNKWIH</sequence>
<organism>
    <name type="scientific">Saccharomyces cerevisiae (strain ATCC 204508 / S288c)</name>
    <name type="common">Baker's yeast</name>
    <dbReference type="NCBI Taxonomy" id="559292"/>
    <lineage>
        <taxon>Eukaryota</taxon>
        <taxon>Fungi</taxon>
        <taxon>Dikarya</taxon>
        <taxon>Ascomycota</taxon>
        <taxon>Saccharomycotina</taxon>
        <taxon>Saccharomycetes</taxon>
        <taxon>Saccharomycetales</taxon>
        <taxon>Saccharomycetaceae</taxon>
        <taxon>Saccharomyces</taxon>
    </lineage>
</organism>
<gene>
    <name type="primary">TY1B-OR</name>
    <name type="synonym">YORWTy1-2 POL</name>
    <name type="ordered locus">YOR142W-B</name>
    <name type="ORF">O3367</name>
    <name type="ORF">YOR3367W</name>
</gene>
<proteinExistence type="inferred from homology"/>
<evidence type="ECO:0000250" key="1"/>
<evidence type="ECO:0000250" key="2">
    <source>
        <dbReference type="UniProtKB" id="Q99231"/>
    </source>
</evidence>
<evidence type="ECO:0000255" key="3">
    <source>
        <dbReference type="PROSITE-ProRule" id="PRU00457"/>
    </source>
</evidence>
<evidence type="ECO:0000255" key="4">
    <source>
        <dbReference type="PROSITE-ProRule" id="PRU10094"/>
    </source>
</evidence>
<evidence type="ECO:0000256" key="5">
    <source>
        <dbReference type="SAM" id="MobiDB-lite"/>
    </source>
</evidence>
<keyword id="KW-0064">Aspartyl protease</keyword>
<keyword id="KW-0067">ATP-binding</keyword>
<keyword id="KW-0963">Cytoplasm</keyword>
<keyword id="KW-0229">DNA integration</keyword>
<keyword id="KW-0233">DNA recombination</keyword>
<keyword id="KW-0238">DNA-binding</keyword>
<keyword id="KW-0239">DNA-directed DNA polymerase</keyword>
<keyword id="KW-0255">Endonuclease</keyword>
<keyword id="KW-0378">Hydrolase</keyword>
<keyword id="KW-0460">Magnesium</keyword>
<keyword id="KW-0479">Metal-binding</keyword>
<keyword id="KW-0511">Multifunctional enzyme</keyword>
<keyword id="KW-0540">Nuclease</keyword>
<keyword id="KW-0547">Nucleotide-binding</keyword>
<keyword id="KW-0548">Nucleotidyltransferase</keyword>
<keyword id="KW-0539">Nucleus</keyword>
<keyword id="KW-0597">Phosphoprotein</keyword>
<keyword id="KW-0645">Protease</keyword>
<keyword id="KW-1185">Reference proteome</keyword>
<keyword id="KW-0688">Ribosomal frameshifting</keyword>
<keyword id="KW-0694">RNA-binding</keyword>
<keyword id="KW-0695">RNA-directed DNA polymerase</keyword>
<keyword id="KW-0808">Transferase</keyword>
<keyword id="KW-0814">Transposable element</keyword>
<keyword id="KW-0815">Transposition</keyword>
<keyword id="KW-1188">Viral release from host cell</keyword>
<keyword id="KW-0917">Virion maturation</keyword>
<keyword id="KW-0862">Zinc</keyword>
<keyword id="KW-0863">Zinc-finger</keyword>
<accession>Q92393</accession>
<accession>D6W2J9</accession>